<reference key="1">
    <citation type="submission" date="2002-09" db="EMBL/GenBank/DDBJ databases">
        <title>Molecular cloning and sequence comparison of serine proteases from the venom of Trimeresurus stejnegeri.</title>
        <authorList>
            <person name="Lee W.-H."/>
            <person name="Zhang Y."/>
        </authorList>
    </citation>
    <scope>NUCLEOTIDE SEQUENCE [MRNA]</scope>
    <source>
        <tissue>Venom gland</tissue>
    </source>
</reference>
<reference key="2">
    <citation type="journal article" date="1998" name="Toxicon">
        <title>Characterization of three fibrinogenolytic enzymes from Chinese green tree viper (Trimeresurus stejnegeri) venom.</title>
        <authorList>
            <person name="Gao R."/>
            <person name="Zhang Y."/>
            <person name="Meng Q.-X."/>
            <person name="Lee W.-H."/>
            <person name="Li D.-S."/>
            <person name="Xiong Y.-L."/>
            <person name="Wang W.-Y."/>
        </authorList>
    </citation>
    <scope>FUNCTION</scope>
    <scope>ACTIVITY REGULATION</scope>
    <scope>BIOPHYSICOCHEMICAL PROPERTIES</scope>
    <scope>SUBUNIT</scope>
    <scope>SUBCELLULAR LOCATION</scope>
    <scope>TISSUE SPECIFICITY</scope>
    <source>
        <tissue>Venom</tissue>
    </source>
</reference>
<feature type="signal peptide" evidence="2">
    <location>
        <begin position="1"/>
        <end position="18"/>
    </location>
</feature>
<feature type="propeptide" id="PRO_0000295844" evidence="1">
    <location>
        <begin position="19"/>
        <end position="24"/>
    </location>
</feature>
<feature type="chain" id="PRO_0000295845" description="Alpha- and beta-fibrinogenase stejnefibrase-1">
    <location>
        <begin position="25"/>
        <end position="258"/>
    </location>
</feature>
<feature type="domain" description="Peptidase S1" evidence="3">
    <location>
        <begin position="25"/>
        <end position="249"/>
    </location>
</feature>
<feature type="active site" description="Charge relay system" evidence="1">
    <location>
        <position position="65"/>
    </location>
</feature>
<feature type="active site" description="Charge relay system" evidence="1">
    <location>
        <position position="110"/>
    </location>
</feature>
<feature type="active site" description="Charge relay system" evidence="1">
    <location>
        <position position="204"/>
    </location>
</feature>
<feature type="glycosylation site" description="N-linked (GlcNAc...) asparagine" evidence="2">
    <location>
        <position position="103"/>
    </location>
</feature>
<feature type="glycosylation site" description="N-linked (GlcNAc...) asparagine" evidence="2">
    <location>
        <position position="121"/>
    </location>
</feature>
<feature type="glycosylation site" description="N-linked (GlcNAc...) asparagine" evidence="2">
    <location>
        <position position="122"/>
    </location>
</feature>
<feature type="glycosylation site" description="N-linked (GlcNAc...) asparagine" evidence="2">
    <location>
        <position position="154"/>
    </location>
</feature>
<feature type="glycosylation site" description="N-linked (GlcNAc...) asparagine" evidence="2">
    <location>
        <position position="170"/>
    </location>
</feature>
<feature type="disulfide bond" evidence="3">
    <location>
        <begin position="31"/>
        <end position="163"/>
    </location>
</feature>
<feature type="disulfide bond" evidence="3">
    <location>
        <begin position="50"/>
        <end position="66"/>
    </location>
</feature>
<feature type="disulfide bond" evidence="3">
    <location>
        <begin position="98"/>
        <end position="256"/>
    </location>
</feature>
<feature type="disulfide bond" evidence="3">
    <location>
        <begin position="142"/>
        <end position="210"/>
    </location>
</feature>
<feature type="disulfide bond" evidence="3">
    <location>
        <begin position="174"/>
        <end position="189"/>
    </location>
</feature>
<feature type="disulfide bond" evidence="3">
    <location>
        <begin position="200"/>
        <end position="225"/>
    </location>
</feature>
<accession>Q8AY80</accession>
<organism>
    <name type="scientific">Trimeresurus stejnegeri</name>
    <name type="common">Chinese green tree viper</name>
    <name type="synonym">Viridovipera stejnegeri</name>
    <dbReference type="NCBI Taxonomy" id="39682"/>
    <lineage>
        <taxon>Eukaryota</taxon>
        <taxon>Metazoa</taxon>
        <taxon>Chordata</taxon>
        <taxon>Craniata</taxon>
        <taxon>Vertebrata</taxon>
        <taxon>Euteleostomi</taxon>
        <taxon>Lepidosauria</taxon>
        <taxon>Squamata</taxon>
        <taxon>Bifurcata</taxon>
        <taxon>Unidentata</taxon>
        <taxon>Episquamata</taxon>
        <taxon>Toxicofera</taxon>
        <taxon>Serpentes</taxon>
        <taxon>Colubroidea</taxon>
        <taxon>Viperidae</taxon>
        <taxon>Crotalinae</taxon>
        <taxon>Trimeresurus</taxon>
    </lineage>
</organism>
<protein>
    <recommendedName>
        <fullName>Alpha- and beta-fibrinogenase stejnefibrase-1</fullName>
        <ecNumber>3.4.21.-</ecNumber>
    </recommendedName>
    <alternativeName>
        <fullName>Snake venom serine protease</fullName>
        <shortName>SVSP</shortName>
    </alternativeName>
</protein>
<name>VSPS1_TRIST</name>
<keyword id="KW-1015">Disulfide bond</keyword>
<keyword id="KW-1206">Fibrinogenolytic toxin</keyword>
<keyword id="KW-0325">Glycoprotein</keyword>
<keyword id="KW-1199">Hemostasis impairing toxin</keyword>
<keyword id="KW-0378">Hydrolase</keyword>
<keyword id="KW-0645">Protease</keyword>
<keyword id="KW-0964">Secreted</keyword>
<keyword id="KW-0720">Serine protease</keyword>
<keyword id="KW-0732">Signal</keyword>
<keyword id="KW-0800">Toxin</keyword>
<keyword id="KW-0865">Zymogen</keyword>
<sequence length="258" mass="28391">MELIRVLANLLILQLSYAQKSSELIIGGDECNIDEHRFLVALYKSGRFRCGGTLINQEWVLTAAHCDRRNMEIKLGMHSKNVPNEDEQRRVPKEKFFCDSNKNYTQWNKDIMLIRLNSPVNNSTHIAPLSLPSSPPIVGSVCRIMGWGTITSPNETYPDVPHCANINLFNYTVCHGAHAGLPATSRTLCAGVLEGGKDTCKGDSGGPLICNGQFQGIVSWGGHPCAQPREPGVYTKVFDHLDWIQNIIAGSTTATCPL</sequence>
<proteinExistence type="evidence at protein level"/>
<dbReference type="EC" id="3.4.21.-"/>
<dbReference type="EMBL" id="AF545577">
    <property type="protein sequence ID" value="AAN52348.1"/>
    <property type="molecule type" value="mRNA"/>
</dbReference>
<dbReference type="SMR" id="Q8AY80"/>
<dbReference type="MEROPS" id="S01.497"/>
<dbReference type="SABIO-RK" id="Q8AY80"/>
<dbReference type="GO" id="GO:0005576">
    <property type="term" value="C:extracellular region"/>
    <property type="evidence" value="ECO:0007669"/>
    <property type="project" value="UniProtKB-SubCell"/>
</dbReference>
<dbReference type="GO" id="GO:0030141">
    <property type="term" value="C:secretory granule"/>
    <property type="evidence" value="ECO:0007669"/>
    <property type="project" value="TreeGrafter"/>
</dbReference>
<dbReference type="GO" id="GO:0004252">
    <property type="term" value="F:serine-type endopeptidase activity"/>
    <property type="evidence" value="ECO:0007669"/>
    <property type="project" value="InterPro"/>
</dbReference>
<dbReference type="GO" id="GO:0090729">
    <property type="term" value="F:toxin activity"/>
    <property type="evidence" value="ECO:0007669"/>
    <property type="project" value="UniProtKB-KW"/>
</dbReference>
<dbReference type="GO" id="GO:0006508">
    <property type="term" value="P:proteolysis"/>
    <property type="evidence" value="ECO:0007669"/>
    <property type="project" value="UniProtKB-KW"/>
</dbReference>
<dbReference type="CDD" id="cd00190">
    <property type="entry name" value="Tryp_SPc"/>
    <property type="match status" value="1"/>
</dbReference>
<dbReference type="FunFam" id="2.40.10.10:FF:000158">
    <property type="entry name" value="Thrombin-like enzyme saxthrombin"/>
    <property type="match status" value="1"/>
</dbReference>
<dbReference type="FunFam" id="2.40.10.10:FF:000153">
    <property type="entry name" value="Venom plasminogen activator TSV-PA"/>
    <property type="match status" value="1"/>
</dbReference>
<dbReference type="Gene3D" id="2.40.10.10">
    <property type="entry name" value="Trypsin-like serine proteases"/>
    <property type="match status" value="2"/>
</dbReference>
<dbReference type="InterPro" id="IPR009003">
    <property type="entry name" value="Peptidase_S1_PA"/>
</dbReference>
<dbReference type="InterPro" id="IPR043504">
    <property type="entry name" value="Peptidase_S1_PA_chymotrypsin"/>
</dbReference>
<dbReference type="InterPro" id="IPR001314">
    <property type="entry name" value="Peptidase_S1A"/>
</dbReference>
<dbReference type="InterPro" id="IPR001254">
    <property type="entry name" value="Trypsin_dom"/>
</dbReference>
<dbReference type="InterPro" id="IPR018114">
    <property type="entry name" value="TRYPSIN_HIS"/>
</dbReference>
<dbReference type="InterPro" id="IPR033116">
    <property type="entry name" value="TRYPSIN_SER"/>
</dbReference>
<dbReference type="PANTHER" id="PTHR24271:SF47">
    <property type="entry name" value="KALLIKREIN-1"/>
    <property type="match status" value="1"/>
</dbReference>
<dbReference type="PANTHER" id="PTHR24271">
    <property type="entry name" value="KALLIKREIN-RELATED"/>
    <property type="match status" value="1"/>
</dbReference>
<dbReference type="Pfam" id="PF00089">
    <property type="entry name" value="Trypsin"/>
    <property type="match status" value="1"/>
</dbReference>
<dbReference type="PRINTS" id="PR00722">
    <property type="entry name" value="CHYMOTRYPSIN"/>
</dbReference>
<dbReference type="SMART" id="SM00020">
    <property type="entry name" value="Tryp_SPc"/>
    <property type="match status" value="1"/>
</dbReference>
<dbReference type="SUPFAM" id="SSF50494">
    <property type="entry name" value="Trypsin-like serine proteases"/>
    <property type="match status" value="1"/>
</dbReference>
<dbReference type="PROSITE" id="PS50240">
    <property type="entry name" value="TRYPSIN_DOM"/>
    <property type="match status" value="1"/>
</dbReference>
<dbReference type="PROSITE" id="PS00134">
    <property type="entry name" value="TRYPSIN_HIS"/>
    <property type="match status" value="1"/>
</dbReference>
<dbReference type="PROSITE" id="PS00135">
    <property type="entry name" value="TRYPSIN_SER"/>
    <property type="match status" value="1"/>
</dbReference>
<comment type="function">
    <text evidence="4">Snake venom serine protease. Degrades concomitantly alpha- (FGA) and beta-chains of fibrinogen (FGB).</text>
</comment>
<comment type="activity regulation">
    <text evidence="4">Its activity is inhibited by PMSF and p-nitrophenyl-p-guanidinobenzoate (NPGB).</text>
</comment>
<comment type="biophysicochemical properties">
    <kinetics>
        <KM evidence="4">235 uM for S-2238</KM>
        <KM evidence="4">100 uM for S-2302</KM>
    </kinetics>
</comment>
<comment type="subunit">
    <text evidence="4">Monomer.</text>
</comment>
<comment type="subcellular location">
    <subcellularLocation>
        <location evidence="4">Secreted</location>
    </subcellularLocation>
</comment>
<comment type="tissue specificity">
    <text evidence="4">Expressed by the venom gland.</text>
</comment>
<comment type="miscellaneous">
    <text evidence="5">Negative results: does not degrade the gamma-chain of fibrinogen, does not activate plasminogen and does not possess fibrinogen-clotting activity.</text>
</comment>
<comment type="similarity">
    <text evidence="3">Belongs to the peptidase S1 family. Snake venom subfamily.</text>
</comment>
<evidence type="ECO:0000250" key="1"/>
<evidence type="ECO:0000255" key="2"/>
<evidence type="ECO:0000255" key="3">
    <source>
        <dbReference type="PROSITE-ProRule" id="PRU00274"/>
    </source>
</evidence>
<evidence type="ECO:0000269" key="4">
    <source>
    </source>
</evidence>
<evidence type="ECO:0000305" key="5">
    <source>
    </source>
</evidence>